<organism>
    <name type="scientific">Mus musculus</name>
    <name type="common">Mouse</name>
    <dbReference type="NCBI Taxonomy" id="10090"/>
    <lineage>
        <taxon>Eukaryota</taxon>
        <taxon>Metazoa</taxon>
        <taxon>Chordata</taxon>
        <taxon>Craniata</taxon>
        <taxon>Vertebrata</taxon>
        <taxon>Euteleostomi</taxon>
        <taxon>Mammalia</taxon>
        <taxon>Eutheria</taxon>
        <taxon>Euarchontoglires</taxon>
        <taxon>Glires</taxon>
        <taxon>Rodentia</taxon>
        <taxon>Myomorpha</taxon>
        <taxon>Muroidea</taxon>
        <taxon>Muridae</taxon>
        <taxon>Murinae</taxon>
        <taxon>Mus</taxon>
        <taxon>Mus</taxon>
    </lineage>
</organism>
<evidence type="ECO:0000250" key="1"/>
<evidence type="ECO:0000250" key="2">
    <source>
        <dbReference type="UniProtKB" id="Q9R1N3"/>
    </source>
</evidence>
<evidence type="ECO:0000250" key="3">
    <source>
        <dbReference type="UniProtKB" id="Q9Y6M7"/>
    </source>
</evidence>
<evidence type="ECO:0000250" key="4">
    <source>
        <dbReference type="UniProtKB" id="Q9Y6R1"/>
    </source>
</evidence>
<evidence type="ECO:0000255" key="5"/>
<evidence type="ECO:0000256" key="6">
    <source>
        <dbReference type="SAM" id="MobiDB-lite"/>
    </source>
</evidence>
<evidence type="ECO:0000269" key="7">
    <source>
    </source>
</evidence>
<evidence type="ECO:0000269" key="8">
    <source>
    </source>
</evidence>
<evidence type="ECO:0000269" key="9">
    <source>
    </source>
</evidence>
<evidence type="ECO:0000269" key="10">
    <source>
    </source>
</evidence>
<evidence type="ECO:0000269" key="11">
    <source>
    </source>
</evidence>
<evidence type="ECO:0000269" key="12">
    <source>
    </source>
</evidence>
<evidence type="ECO:0000269" key="13">
    <source>
    </source>
</evidence>
<evidence type="ECO:0000269" key="14">
    <source>
    </source>
</evidence>
<evidence type="ECO:0000269" key="15">
    <source>
    </source>
</evidence>
<evidence type="ECO:0000303" key="16">
    <source>
    </source>
</evidence>
<evidence type="ECO:0000305" key="17"/>
<evidence type="ECO:0007744" key="18">
    <source>
    </source>
</evidence>
<evidence type="ECO:0007744" key="19">
    <source>
    </source>
</evidence>
<evidence type="ECO:0007744" key="20">
    <source>
    </source>
</evidence>
<evidence type="ECO:0007744" key="21">
    <source>
    </source>
</evidence>
<gene>
    <name type="primary">Slc4a7</name>
    <name type="synonym">Nbc3</name>
</gene>
<reference key="1">
    <citation type="journal article" date="2005" name="Science">
        <title>The transcriptional landscape of the mammalian genome.</title>
        <authorList>
            <person name="Carninci P."/>
            <person name="Kasukawa T."/>
            <person name="Katayama S."/>
            <person name="Gough J."/>
            <person name="Frith M.C."/>
            <person name="Maeda N."/>
            <person name="Oyama R."/>
            <person name="Ravasi T."/>
            <person name="Lenhard B."/>
            <person name="Wells C."/>
            <person name="Kodzius R."/>
            <person name="Shimokawa K."/>
            <person name="Bajic V.B."/>
            <person name="Brenner S.E."/>
            <person name="Batalov S."/>
            <person name="Forrest A.R."/>
            <person name="Zavolan M."/>
            <person name="Davis M.J."/>
            <person name="Wilming L.G."/>
            <person name="Aidinis V."/>
            <person name="Allen J.E."/>
            <person name="Ambesi-Impiombato A."/>
            <person name="Apweiler R."/>
            <person name="Aturaliya R.N."/>
            <person name="Bailey T.L."/>
            <person name="Bansal M."/>
            <person name="Baxter L."/>
            <person name="Beisel K.W."/>
            <person name="Bersano T."/>
            <person name="Bono H."/>
            <person name="Chalk A.M."/>
            <person name="Chiu K.P."/>
            <person name="Choudhary V."/>
            <person name="Christoffels A."/>
            <person name="Clutterbuck D.R."/>
            <person name="Crowe M.L."/>
            <person name="Dalla E."/>
            <person name="Dalrymple B.P."/>
            <person name="de Bono B."/>
            <person name="Della Gatta G."/>
            <person name="di Bernardo D."/>
            <person name="Down T."/>
            <person name="Engstrom P."/>
            <person name="Fagiolini M."/>
            <person name="Faulkner G."/>
            <person name="Fletcher C.F."/>
            <person name="Fukushima T."/>
            <person name="Furuno M."/>
            <person name="Futaki S."/>
            <person name="Gariboldi M."/>
            <person name="Georgii-Hemming P."/>
            <person name="Gingeras T.R."/>
            <person name="Gojobori T."/>
            <person name="Green R.E."/>
            <person name="Gustincich S."/>
            <person name="Harbers M."/>
            <person name="Hayashi Y."/>
            <person name="Hensch T.K."/>
            <person name="Hirokawa N."/>
            <person name="Hill D."/>
            <person name="Huminiecki L."/>
            <person name="Iacono M."/>
            <person name="Ikeo K."/>
            <person name="Iwama A."/>
            <person name="Ishikawa T."/>
            <person name="Jakt M."/>
            <person name="Kanapin A."/>
            <person name="Katoh M."/>
            <person name="Kawasawa Y."/>
            <person name="Kelso J."/>
            <person name="Kitamura H."/>
            <person name="Kitano H."/>
            <person name="Kollias G."/>
            <person name="Krishnan S.P."/>
            <person name="Kruger A."/>
            <person name="Kummerfeld S.K."/>
            <person name="Kurochkin I.V."/>
            <person name="Lareau L.F."/>
            <person name="Lazarevic D."/>
            <person name="Lipovich L."/>
            <person name="Liu J."/>
            <person name="Liuni S."/>
            <person name="McWilliam S."/>
            <person name="Madan Babu M."/>
            <person name="Madera M."/>
            <person name="Marchionni L."/>
            <person name="Matsuda H."/>
            <person name="Matsuzawa S."/>
            <person name="Miki H."/>
            <person name="Mignone F."/>
            <person name="Miyake S."/>
            <person name="Morris K."/>
            <person name="Mottagui-Tabar S."/>
            <person name="Mulder N."/>
            <person name="Nakano N."/>
            <person name="Nakauchi H."/>
            <person name="Ng P."/>
            <person name="Nilsson R."/>
            <person name="Nishiguchi S."/>
            <person name="Nishikawa S."/>
            <person name="Nori F."/>
            <person name="Ohara O."/>
            <person name="Okazaki Y."/>
            <person name="Orlando V."/>
            <person name="Pang K.C."/>
            <person name="Pavan W.J."/>
            <person name="Pavesi G."/>
            <person name="Pesole G."/>
            <person name="Petrovsky N."/>
            <person name="Piazza S."/>
            <person name="Reed J."/>
            <person name="Reid J.F."/>
            <person name="Ring B.Z."/>
            <person name="Ringwald M."/>
            <person name="Rost B."/>
            <person name="Ruan Y."/>
            <person name="Salzberg S.L."/>
            <person name="Sandelin A."/>
            <person name="Schneider C."/>
            <person name="Schoenbach C."/>
            <person name="Sekiguchi K."/>
            <person name="Semple C.A."/>
            <person name="Seno S."/>
            <person name="Sessa L."/>
            <person name="Sheng Y."/>
            <person name="Shibata Y."/>
            <person name="Shimada H."/>
            <person name="Shimada K."/>
            <person name="Silva D."/>
            <person name="Sinclair B."/>
            <person name="Sperling S."/>
            <person name="Stupka E."/>
            <person name="Sugiura K."/>
            <person name="Sultana R."/>
            <person name="Takenaka Y."/>
            <person name="Taki K."/>
            <person name="Tammoja K."/>
            <person name="Tan S.L."/>
            <person name="Tang S."/>
            <person name="Taylor M.S."/>
            <person name="Tegner J."/>
            <person name="Teichmann S.A."/>
            <person name="Ueda H.R."/>
            <person name="van Nimwegen E."/>
            <person name="Verardo R."/>
            <person name="Wei C.L."/>
            <person name="Yagi K."/>
            <person name="Yamanishi H."/>
            <person name="Zabarovsky E."/>
            <person name="Zhu S."/>
            <person name="Zimmer A."/>
            <person name="Hide W."/>
            <person name="Bult C."/>
            <person name="Grimmond S.M."/>
            <person name="Teasdale R.D."/>
            <person name="Liu E.T."/>
            <person name="Brusic V."/>
            <person name="Quackenbush J."/>
            <person name="Wahlestedt C."/>
            <person name="Mattick J.S."/>
            <person name="Hume D.A."/>
            <person name="Kai C."/>
            <person name="Sasaki D."/>
            <person name="Tomaru Y."/>
            <person name="Fukuda S."/>
            <person name="Kanamori-Katayama M."/>
            <person name="Suzuki M."/>
            <person name="Aoki J."/>
            <person name="Arakawa T."/>
            <person name="Iida J."/>
            <person name="Imamura K."/>
            <person name="Itoh M."/>
            <person name="Kato T."/>
            <person name="Kawaji H."/>
            <person name="Kawagashira N."/>
            <person name="Kawashima T."/>
            <person name="Kojima M."/>
            <person name="Kondo S."/>
            <person name="Konno H."/>
            <person name="Nakano K."/>
            <person name="Ninomiya N."/>
            <person name="Nishio T."/>
            <person name="Okada M."/>
            <person name="Plessy C."/>
            <person name="Shibata K."/>
            <person name="Shiraki T."/>
            <person name="Suzuki S."/>
            <person name="Tagami M."/>
            <person name="Waki K."/>
            <person name="Watahiki A."/>
            <person name="Okamura-Oho Y."/>
            <person name="Suzuki H."/>
            <person name="Kawai J."/>
            <person name="Hayashizaki Y."/>
        </authorList>
    </citation>
    <scope>NUCLEOTIDE SEQUENCE [LARGE SCALE MRNA] (ISOFORM 2)</scope>
    <scope>NUCLEOTIDE SEQUENCE [LARGE SCALE MRNA] OF 1-932 (ISOFORM 1)</scope>
    <source>
        <strain>C57BL/6J</strain>
        <strain>NOD</strain>
        <tissue>Bone marrow</tissue>
        <tissue>Thymus</tissue>
    </source>
</reference>
<reference key="2">
    <citation type="journal article" date="2004" name="Genome Res.">
        <title>The status, quality, and expansion of the NIH full-length cDNA project: the Mammalian Gene Collection (MGC).</title>
        <authorList>
            <consortium name="The MGC Project Team"/>
        </authorList>
    </citation>
    <scope>NUCLEOTIDE SEQUENCE [LARGE SCALE MRNA] OF 826-1034 (ISOFORM 1)</scope>
    <source>
        <strain>C57BL/6J</strain>
        <tissue>Brain</tissue>
    </source>
</reference>
<reference key="3">
    <citation type="journal article" date="2002" name="J. Biol. Chem.">
        <title>The cystic fibrosis transmembrane conductance regulator interacts with and regulates the activity of the HCO3- salvage transporter human Na+-HCO3-cotransport isoform 3.</title>
        <authorList>
            <person name="Park M."/>
            <person name="Ko S.B.H."/>
            <person name="Choi J.Y."/>
            <person name="Muallem G."/>
            <person name="Thomas P.J."/>
            <person name="Pushkin A."/>
            <person name="Lee M.-S."/>
            <person name="Kim J.Y."/>
            <person name="Lee M.G."/>
            <person name="Muallem S."/>
            <person name="Kurtz I."/>
        </authorList>
    </citation>
    <scope>INTERACTION WITH CFTR AND NHERF1</scope>
</reference>
<reference key="4">
    <citation type="journal article" date="2003" name="Nat. Genet.">
        <title>Blindness and auditory impairment caused by loss of the sodium bicarbonate cotransporter NBC3.</title>
        <authorList>
            <person name="Bok D."/>
            <person name="Galbraith G."/>
            <person name="Lopez I."/>
            <person name="Woodruff M."/>
            <person name="Nusinowitz S."/>
            <person name="BeltrandelRio H."/>
            <person name="Huang W."/>
            <person name="Zhao S."/>
            <person name="Geske R."/>
            <person name="Montgomery C."/>
            <person name="van Sligtenhorst I."/>
            <person name="Friddle C."/>
            <person name="Platt K."/>
            <person name="Sparks M.J."/>
            <person name="Pushkin A."/>
            <person name="Abuladze N."/>
            <person name="Ishiyama A."/>
            <person name="Dukkipati R."/>
            <person name="Liu W."/>
            <person name="Kurtz I."/>
        </authorList>
    </citation>
    <scope>FUNCTION</scope>
    <scope>TISSUE SPECIFICITY</scope>
    <scope>DISRUPTION PHENOTYPE</scope>
</reference>
<reference key="5">
    <citation type="journal article" date="2005" name="Hum. Mol. Genet.">
        <title>Scaffold protein harmonin (USH1C) provides molecular links between Usher syndrome type 1 and type 2.</title>
        <authorList>
            <person name="Reiners J."/>
            <person name="van Wijk E."/>
            <person name="Maerker T."/>
            <person name="Zimmermann U."/>
            <person name="Juergens K."/>
            <person name="te Brinke H."/>
            <person name="Overlack N."/>
            <person name="Roepman R."/>
            <person name="Knipper M."/>
            <person name="Kremer H."/>
            <person name="Wolfrum U."/>
        </authorList>
    </citation>
    <scope>INTERACTION WITH USH1C</scope>
    <scope>TISSUE SPECIFICITY</scope>
</reference>
<reference key="6">
    <citation type="journal article" date="2006" name="Circ. Res.">
        <title>NBCn1 (slc4a7) mediates the Na+-dependent bicarbonate transport important for regulation of intracellular pH in mouse vascular smooth muscle cells.</title>
        <authorList>
            <person name="Boedtkjer E."/>
            <person name="Praetorius J."/>
            <person name="Aalkjaer C."/>
        </authorList>
    </citation>
    <scope>FUNCTION</scope>
    <scope>TRANSPORTER ACTIVITY</scope>
    <scope>ACTIVITY REGULATION</scope>
    <scope>SUBCELLULAR LOCATION</scope>
</reference>
<reference key="7">
    <citation type="journal article" date="2007" name="Am. J. Physiol.">
        <title>Chronic continuous hypoxia decreases the expression of SLC4A7 (NBCn1) and SLC4A10 (NCBE) in mouse brain.</title>
        <authorList>
            <person name="Chen L.M."/>
            <person name="Choi I."/>
            <person name="Haddad G.G."/>
            <person name="Boron W.F."/>
        </authorList>
    </citation>
    <scope>REPRESSION BY HYPOXIA</scope>
</reference>
<reference key="8">
    <citation type="journal article" date="2007" name="Proc. Natl. Acad. Sci. U.S.A.">
        <title>Large-scale phosphorylation analysis of mouse liver.</title>
        <authorList>
            <person name="Villen J."/>
            <person name="Beausoleil S.A."/>
            <person name="Gerber S.A."/>
            <person name="Gygi S.P."/>
        </authorList>
    </citation>
    <scope>PHOSPHORYLATION [LARGE SCALE ANALYSIS] AT SER-275</scope>
    <scope>IDENTIFICATION BY MASS SPECTROMETRY [LARGE SCALE ANALYSIS]</scope>
    <source>
        <tissue>Liver</tissue>
    </source>
</reference>
<reference key="9">
    <citation type="journal article" date="2009" name="Immunity">
        <title>The phagosomal proteome in interferon-gamma-activated macrophages.</title>
        <authorList>
            <person name="Trost M."/>
            <person name="English L."/>
            <person name="Lemieux S."/>
            <person name="Courcelles M."/>
            <person name="Desjardins M."/>
            <person name="Thibault P."/>
        </authorList>
    </citation>
    <scope>PHOSPHORYLATION [LARGE SCALE ANALYSIS] AT SER-57; SER-238 AND SER-960</scope>
    <scope>PHOSPHORYLATION [LARGE SCALE ANALYSIS] AT SER-263 (ISOFORM 2)</scope>
    <scope>IDENTIFICATION BY MASS SPECTROMETRY [LARGE SCALE ANALYSIS]</scope>
</reference>
<reference key="10">
    <citation type="journal article" date="2009" name="Mol. Cell. Proteomics">
        <title>Large scale localization of protein phosphorylation by use of electron capture dissociation mass spectrometry.</title>
        <authorList>
            <person name="Sweet S.M."/>
            <person name="Bailey C.M."/>
            <person name="Cunningham D.L."/>
            <person name="Heath J.K."/>
            <person name="Cooper H.J."/>
        </authorList>
    </citation>
    <scope>PHOSPHORYLATION [LARGE SCALE ANALYSIS] AT SER-960</scope>
    <scope>IDENTIFICATION BY MASS SPECTROMETRY [LARGE SCALE ANALYSIS]</scope>
    <source>
        <tissue>Embryonic fibroblast</tissue>
    </source>
</reference>
<reference key="11">
    <citation type="journal article" date="2009" name="Nat. Biotechnol.">
        <title>Mass-spectrometric identification and relative quantification of N-linked cell surface glycoproteins.</title>
        <authorList>
            <person name="Wollscheid B."/>
            <person name="Bausch-Fluck D."/>
            <person name="Henderson C."/>
            <person name="O'Brien R."/>
            <person name="Bibel M."/>
            <person name="Schiess R."/>
            <person name="Aebersold R."/>
            <person name="Watts J.D."/>
        </authorList>
    </citation>
    <scope>GLYCOSYLATION [LARGE SCALE ANALYSIS] AT ASN-654 AND ASN-664</scope>
</reference>
<reference key="12">
    <citation type="journal article" date="2010" name="Cell">
        <title>A tissue-specific atlas of mouse protein phosphorylation and expression.</title>
        <authorList>
            <person name="Huttlin E.L."/>
            <person name="Jedrychowski M.P."/>
            <person name="Elias J.E."/>
            <person name="Goswami T."/>
            <person name="Rad R."/>
            <person name="Beausoleil S.A."/>
            <person name="Villen J."/>
            <person name="Haas W."/>
            <person name="Sowa M.E."/>
            <person name="Gygi S.P."/>
        </authorList>
    </citation>
    <scope>PHOSPHORYLATION [LARGE SCALE ANALYSIS] AT SER-238; SER-250; SER-271; SER-275; THR-951 AND SER-960</scope>
    <scope>PHOSPHORYLATION [LARGE SCALE ANALYSIS] AT SER-260 AND SER-263 (ISOFORM 2)</scope>
    <scope>IDENTIFICATION BY MASS SPECTROMETRY [LARGE SCALE ANALYSIS]</scope>
    <source>
        <tissue>Brain</tissue>
        <tissue>Brown adipose tissue</tissue>
        <tissue>Heart</tissue>
        <tissue>Kidney</tissue>
        <tissue>Liver</tissue>
        <tissue>Lung</tissue>
        <tissue>Pancreas</tissue>
        <tissue>Spleen</tissue>
        <tissue>Testis</tissue>
    </source>
</reference>
<reference key="13">
    <citation type="journal article" date="2012" name="J. Physiol. (Lond.)">
        <title>The electroneutral Na(+):HCO(3)(-) cotransporter NBCn1 is a major pHi regulator in murine duodenum.</title>
        <authorList>
            <person name="Chen M."/>
            <person name="Praetorius J."/>
            <person name="Zheng W."/>
            <person name="Xiao F."/>
            <person name="Riederer B."/>
            <person name="Singh A.K."/>
            <person name="Stieger N."/>
            <person name="Wang J."/>
            <person name="Shull G.E."/>
            <person name="Aalkjaer C."/>
            <person name="Seidler U."/>
        </authorList>
    </citation>
    <scope>FUNCTION</scope>
    <scope>TRANSPORTER ACTIVITY</scope>
    <scope>SUBCELLULAR LOCATION</scope>
    <scope>DISRUPTION PHENOTYPE</scope>
</reference>
<reference key="14">
    <citation type="journal article" date="2013" name="J. Physiol. (Lond.)">
        <title>Essential role of the electroneutral Na+-HCO3- cotransporter NBCn1 in murine duodenal acid-base balance and colonic mucus layer build-up in vivo.</title>
        <authorList>
            <person name="Singh A.K."/>
            <person name="Xia W."/>
            <person name="Riederer B."/>
            <person name="Juric M."/>
            <person name="Li J."/>
            <person name="Zheng W."/>
            <person name="Cinar A."/>
            <person name="Xiao F."/>
            <person name="Bachmann O."/>
            <person name="Song P."/>
            <person name="Praetorius J."/>
            <person name="Aalkjaer C."/>
            <person name="Seidler U."/>
        </authorList>
    </citation>
    <scope>FUNCTION</scope>
    <scope>TRANSPORTER ACTIVITY</scope>
    <scope>SUBCELLULAR LOCATION</scope>
    <scope>DISRUPTION PHENOTYPE</scope>
</reference>
<reference key="15">
    <citation type="journal article" date="2021" name="Behav. Brain Res.">
        <title>Sodium bicarbonate cotransporter NBCn1/Slc4a7 affects locomotor activity and hearing in mice.</title>
        <authorList>
            <person name="Choi I."/>
            <person name="Beedholm K."/>
            <person name="Dam V.S."/>
            <person name="Bae S.H."/>
            <person name="Noble D.J."/>
            <person name="Garraway S.M."/>
            <person name="Aalkjaer C."/>
            <person name="Boedtkjer E."/>
        </authorList>
    </citation>
    <scope>FUNCTION</scope>
    <scope>DISRUPTION PHENOTYPE</scope>
</reference>
<comment type="function">
    <text evidence="3 8 10 13 14 15">Electroneutral sodium- and bicarbonate-dependent cotransporter with a Na(+):HCO3(-) 1:1 stoichiometry (PubMed:16439691, PubMed:22586225, PubMed:23401617). Mediates the sodium-dependent bicarbonate transport important for pH recovery after acid load as well as for regulation of steady-state pH in the duodenum and vascular smooth muscle cells (PubMed:16439691, PubMed:22586225, PubMed:23401617). Plays a key role in macrophage acidification, mediating bicarbonate import into the cytoplasm which is crucial for net acid extrusion and maintenance of cytoplasmic pH during phagocytosis (By similarity). Provides cellular bicarbonate for de novo purine and pyrimidine synthesis and is a key mediator of de novo nucleotide synthesis downstream of mTORC1 signaling in proliferating cells (By similarity). May be involved in maintaining locomotor activity, exploratory behavior, and hearing (PubMed:12808454, PubMed:33321164).</text>
</comment>
<comment type="catalytic activity">
    <reaction evidence="10 13 14">
        <text>hydrogencarbonate(in) + Na(+)(in) = hydrogencarbonate(out) + Na(+)(out)</text>
        <dbReference type="Rhea" id="RHEA:70267"/>
        <dbReference type="ChEBI" id="CHEBI:17544"/>
        <dbReference type="ChEBI" id="CHEBI:29101"/>
    </reaction>
</comment>
<comment type="activity regulation">
    <text evidence="10">Activity is inhibited by 4,4'-di-isothiocyanatostilbene-2,2'-disulfonic acid (DIDS - an inhibitor of several anion channels and transporters).</text>
</comment>
<comment type="subunit">
    <text evidence="3 7 9">Forms a complex with ATP6V1B1 and NHERF1/EBP50. Interacts in a pH dependent-manner with CA2/carbonic anhydrase 2 (By similarity). Interacts with CFTR through NHERF1/EBP50. Interacts with USH1C.</text>
</comment>
<comment type="interaction">
    <interactant intactId="EBI-11621670">
        <id>Q8BTY2</id>
    </interactant>
    <interactant intactId="EBI-7418919">
        <id>Q9ES64-3</id>
        <label>Ush1c</label>
    </interactant>
    <organismsDiffer>false</organismsDiffer>
    <experiments>2</experiments>
</comment>
<comment type="subcellular location">
    <subcellularLocation>
        <location evidence="13 14">Basolateral cell membrane</location>
        <topology evidence="5">Multi-pass membrane protein</topology>
    </subcellularLocation>
    <subcellularLocation>
        <location evidence="2">Apical cell membrane</location>
        <topology evidence="5">Multi-pass membrane protein</topology>
    </subcellularLocation>
    <subcellularLocation>
        <location evidence="2">Cell projection</location>
        <location evidence="2">Stereocilium</location>
    </subcellularLocation>
    <subcellularLocation>
        <location evidence="10">Cell membrane</location>
        <topology evidence="5">Multi-pass membrane protein</topology>
    </subcellularLocation>
    <text evidence="2">Localizes to the stereocilia of cochlear outer hair cells and to the lateral membrane of cochlear inner hair cells (By similarity).</text>
</comment>
<comment type="alternative products">
    <event type="alternative splicing"/>
    <isoform>
        <id>Q8BTY2-1</id>
        <name>1</name>
        <sequence type="displayed"/>
    </isoform>
    <isoform>
        <id>Q8BTY2-2</id>
        <name>2</name>
        <sequence type="described" ref="VSP_017166 VSP_017167 VSP_017168"/>
    </isoform>
</comment>
<comment type="tissue specificity">
    <text evidence="8 9">Expressed in the spiral ligament throughout the cochlea and in photoreceptors of the outer plexiform layer of the retina (at protein level).</text>
</comment>
<comment type="induction">
    <text evidence="11">Repressed in the brain by chronic continuous hypoxia (at protein level).</text>
</comment>
<comment type="domain">
    <text evidence="3">The PDZ-binding motif mediates interaction with the CFTR, NHERF1/EBP50 complex and probably with USH1C.</text>
</comment>
<comment type="disruption phenotype">
    <text evidence="8 10 13 14 15">Deafness and blindness due to degeneration of sensory receptors in internal ear and retina (PubMed:12808454). Mice show impaired hearing and reduced locomotor activity and rearing/grooming behaviors (PubMed:33321164). Show defects in the mucosal protective responses to luminal acid, both in the pH recovery of enterocytes after luminal acid exposure and in the acid-induced HCO3(-) secretory defect in the duodenum (PubMed:22586225, PubMed:23401617). Knockdown in mesenteric small arteries leads to a dramatic decrease in the Na(+)-dependent base influx and in steady-state pH (PubMed:16439691).</text>
</comment>
<comment type="similarity">
    <text evidence="17">Belongs to the anion exchanger (TC 2.A.31) family.</text>
</comment>
<proteinExistence type="evidence at protein level"/>
<dbReference type="EMBL" id="AK088400">
    <property type="protein sequence ID" value="BAC40330.1"/>
    <property type="molecule type" value="mRNA"/>
</dbReference>
<dbReference type="EMBL" id="AK152233">
    <property type="protein sequence ID" value="BAE31059.1"/>
    <property type="molecule type" value="mRNA"/>
</dbReference>
<dbReference type="EMBL" id="AK153567">
    <property type="protein sequence ID" value="BAE32101.1"/>
    <property type="molecule type" value="mRNA"/>
</dbReference>
<dbReference type="EMBL" id="CN532915">
    <property type="status" value="NOT_ANNOTATED_CDS"/>
    <property type="molecule type" value="mRNA"/>
</dbReference>
<dbReference type="SMR" id="Q8BTY2"/>
<dbReference type="FunCoup" id="Q8BTY2">
    <property type="interactions" value="950"/>
</dbReference>
<dbReference type="IntAct" id="Q8BTY2">
    <property type="interactions" value="1"/>
</dbReference>
<dbReference type="STRING" id="10090.ENSMUSP00000058313"/>
<dbReference type="ChEMBL" id="CHEMBL3774291"/>
<dbReference type="GlyCosmos" id="Q8BTY2">
    <property type="glycosylation" value="5 sites, No reported glycans"/>
</dbReference>
<dbReference type="GlyGen" id="Q8BTY2">
    <property type="glycosylation" value="6 sites, 2 N-linked glycans (2 sites)"/>
</dbReference>
<dbReference type="iPTMnet" id="Q8BTY2"/>
<dbReference type="PhosphoSitePlus" id="Q8BTY2"/>
<dbReference type="SwissPalm" id="Q8BTY2"/>
<dbReference type="jPOST" id="Q8BTY2"/>
<dbReference type="PaxDb" id="10090-ENSMUSP00000058313"/>
<dbReference type="PeptideAtlas" id="Q8BTY2"/>
<dbReference type="ProteomicsDB" id="260797">
    <molecule id="Q8BTY2-1"/>
</dbReference>
<dbReference type="ProteomicsDB" id="260798">
    <molecule id="Q8BTY2-2"/>
</dbReference>
<dbReference type="Pumba" id="Q8BTY2"/>
<dbReference type="AGR" id="MGI:2443878"/>
<dbReference type="MGI" id="MGI:2443878">
    <property type="gene designation" value="Slc4a7"/>
</dbReference>
<dbReference type="eggNOG" id="KOG1172">
    <property type="taxonomic scope" value="Eukaryota"/>
</dbReference>
<dbReference type="InParanoid" id="Q8BTY2"/>
<dbReference type="PhylomeDB" id="Q8BTY2"/>
<dbReference type="Reactome" id="R-MMU-425381">
    <property type="pathway name" value="Bicarbonate transporters"/>
</dbReference>
<dbReference type="Reactome" id="R-MMU-9013405">
    <property type="pathway name" value="RHOD GTPase cycle"/>
</dbReference>
<dbReference type="Reactome" id="R-MMU-9013406">
    <property type="pathway name" value="RHOQ GTPase cycle"/>
</dbReference>
<dbReference type="Reactome" id="R-MMU-9013407">
    <property type="pathway name" value="RHOH GTPase cycle"/>
</dbReference>
<dbReference type="Reactome" id="R-MMU-9035034">
    <property type="pathway name" value="RHOF GTPase cycle"/>
</dbReference>
<dbReference type="ChiTaRS" id="Slc4a7">
    <property type="organism name" value="mouse"/>
</dbReference>
<dbReference type="PRO" id="PR:Q8BTY2"/>
<dbReference type="Proteomes" id="UP000000589">
    <property type="component" value="Unplaced"/>
</dbReference>
<dbReference type="RNAct" id="Q8BTY2">
    <property type="molecule type" value="protein"/>
</dbReference>
<dbReference type="GO" id="GO:0016324">
    <property type="term" value="C:apical plasma membrane"/>
    <property type="evidence" value="ECO:0000314"/>
    <property type="project" value="UniProtKB"/>
</dbReference>
<dbReference type="GO" id="GO:0016323">
    <property type="term" value="C:basolateral plasma membrane"/>
    <property type="evidence" value="ECO:0000314"/>
    <property type="project" value="UniProtKB"/>
</dbReference>
<dbReference type="GO" id="GO:0005737">
    <property type="term" value="C:cytoplasm"/>
    <property type="evidence" value="ECO:0000314"/>
    <property type="project" value="UniProtKB"/>
</dbReference>
<dbReference type="GO" id="GO:0005886">
    <property type="term" value="C:plasma membrane"/>
    <property type="evidence" value="ECO:0000314"/>
    <property type="project" value="UniProtKB"/>
</dbReference>
<dbReference type="GO" id="GO:0032420">
    <property type="term" value="C:stereocilium"/>
    <property type="evidence" value="ECO:0007669"/>
    <property type="project" value="UniProtKB-SubCell"/>
</dbReference>
<dbReference type="GO" id="GO:0022853">
    <property type="term" value="F:active monoatomic ion transmembrane transporter activity"/>
    <property type="evidence" value="ECO:0007669"/>
    <property type="project" value="UniProtKB-ARBA"/>
</dbReference>
<dbReference type="GO" id="GO:0008509">
    <property type="term" value="F:monoatomic anion transmembrane transporter activity"/>
    <property type="evidence" value="ECO:0007669"/>
    <property type="project" value="InterPro"/>
</dbReference>
<dbReference type="GO" id="GO:0008510">
    <property type="term" value="F:sodium:bicarbonate symporter activity"/>
    <property type="evidence" value="ECO:0000315"/>
    <property type="project" value="UniProtKB"/>
</dbReference>
<dbReference type="GO" id="GO:0005452">
    <property type="term" value="F:solute:inorganic anion antiporter activity"/>
    <property type="evidence" value="ECO:0007669"/>
    <property type="project" value="InterPro"/>
</dbReference>
<dbReference type="GO" id="GO:0060117">
    <property type="term" value="P:auditory receptor cell development"/>
    <property type="evidence" value="ECO:0000315"/>
    <property type="project" value="MGI"/>
</dbReference>
<dbReference type="GO" id="GO:0060219">
    <property type="term" value="P:camera-type eye photoreceptor cell differentiation"/>
    <property type="evidence" value="ECO:0000315"/>
    <property type="project" value="MGI"/>
</dbReference>
<dbReference type="GO" id="GO:0021747">
    <property type="term" value="P:cochlear nucleus development"/>
    <property type="evidence" value="ECO:0000315"/>
    <property type="project" value="MGI"/>
</dbReference>
<dbReference type="GO" id="GO:0035641">
    <property type="term" value="P:locomotory exploration behavior"/>
    <property type="evidence" value="ECO:0000315"/>
    <property type="project" value="UniProtKB"/>
</dbReference>
<dbReference type="GO" id="GO:0051453">
    <property type="term" value="P:regulation of intracellular pH"/>
    <property type="evidence" value="ECO:0000315"/>
    <property type="project" value="UniProtKB"/>
</dbReference>
<dbReference type="GO" id="GO:0061299">
    <property type="term" value="P:retina vasculature morphogenesis in camera-type eye"/>
    <property type="evidence" value="ECO:0000315"/>
    <property type="project" value="MGI"/>
</dbReference>
<dbReference type="GO" id="GO:0046666">
    <property type="term" value="P:retinal cell programmed cell death"/>
    <property type="evidence" value="ECO:0000315"/>
    <property type="project" value="MGI"/>
</dbReference>
<dbReference type="GO" id="GO:0007605">
    <property type="term" value="P:sensory perception of sound"/>
    <property type="evidence" value="ECO:0000315"/>
    <property type="project" value="UniProtKB"/>
</dbReference>
<dbReference type="GO" id="GO:0007601">
    <property type="term" value="P:visual perception"/>
    <property type="evidence" value="ECO:0000315"/>
    <property type="project" value="MGI"/>
</dbReference>
<dbReference type="FunFam" id="1.10.287.570:FF:000001">
    <property type="entry name" value="Anion exchange protein"/>
    <property type="match status" value="1"/>
</dbReference>
<dbReference type="FunFam" id="3.40.930.10:FF:000001">
    <property type="entry name" value="Anion exchange protein"/>
    <property type="match status" value="1"/>
</dbReference>
<dbReference type="Gene3D" id="1.10.287.570">
    <property type="entry name" value="Helical hairpin bin"/>
    <property type="match status" value="1"/>
</dbReference>
<dbReference type="Gene3D" id="3.40.930.10">
    <property type="entry name" value="Mannitol-specific EII, Chain A"/>
    <property type="match status" value="1"/>
</dbReference>
<dbReference type="InterPro" id="IPR013769">
    <property type="entry name" value="Band3_cytoplasmic_dom"/>
</dbReference>
<dbReference type="InterPro" id="IPR011531">
    <property type="entry name" value="HCO3_transpt-like_TM_dom"/>
</dbReference>
<dbReference type="InterPro" id="IPR003020">
    <property type="entry name" value="HCO3_transpt_euk"/>
</dbReference>
<dbReference type="InterPro" id="IPR003024">
    <property type="entry name" value="Na/HCO3_transpt"/>
</dbReference>
<dbReference type="InterPro" id="IPR016152">
    <property type="entry name" value="PTrfase/Anion_transptr"/>
</dbReference>
<dbReference type="NCBIfam" id="TIGR00834">
    <property type="entry name" value="ae"/>
    <property type="match status" value="1"/>
</dbReference>
<dbReference type="PANTHER" id="PTHR11453">
    <property type="entry name" value="ANION EXCHANGE PROTEIN"/>
    <property type="match status" value="1"/>
</dbReference>
<dbReference type="PANTHER" id="PTHR11453:SF105">
    <property type="entry name" value="SODIUM BICARBONATE COTRANSPORTER 3"/>
    <property type="match status" value="1"/>
</dbReference>
<dbReference type="Pfam" id="PF07565">
    <property type="entry name" value="Band_3_cyto"/>
    <property type="match status" value="1"/>
</dbReference>
<dbReference type="Pfam" id="PF00955">
    <property type="entry name" value="HCO3_cotransp"/>
    <property type="match status" value="1"/>
</dbReference>
<dbReference type="PRINTS" id="PR01231">
    <property type="entry name" value="HCO3TRNSPORT"/>
</dbReference>
<dbReference type="PRINTS" id="PR01232">
    <property type="entry name" value="NAHCO3TRSPRT"/>
</dbReference>
<dbReference type="SUPFAM" id="SSF55804">
    <property type="entry name" value="Phoshotransferase/anion transport protein"/>
    <property type="match status" value="1"/>
</dbReference>
<keyword id="KW-0025">Alternative splicing</keyword>
<keyword id="KW-1003">Cell membrane</keyword>
<keyword id="KW-0966">Cell projection</keyword>
<keyword id="KW-1015">Disulfide bond</keyword>
<keyword id="KW-0325">Glycoprotein</keyword>
<keyword id="KW-0406">Ion transport</keyword>
<keyword id="KW-0472">Membrane</keyword>
<keyword id="KW-0597">Phosphoprotein</keyword>
<keyword id="KW-1185">Reference proteome</keyword>
<keyword id="KW-0915">Sodium</keyword>
<keyword id="KW-0739">Sodium transport</keyword>
<keyword id="KW-0769">Symport</keyword>
<keyword id="KW-0812">Transmembrane</keyword>
<keyword id="KW-1133">Transmembrane helix</keyword>
<keyword id="KW-0813">Transport</keyword>
<feature type="chain" id="PRO_0000079234" description="Sodium bicarbonate cotransporter 3">
    <location>
        <begin position="1"/>
        <end position="1034"/>
    </location>
</feature>
<feature type="topological domain" description="Extracellular" evidence="5">
    <location>
        <begin position="1"/>
        <end position="476"/>
    </location>
</feature>
<feature type="transmembrane region" description="Helical" evidence="5">
    <location>
        <begin position="477"/>
        <end position="497"/>
    </location>
</feature>
<feature type="topological domain" description="Cytoplasmic" evidence="5">
    <location>
        <begin position="498"/>
        <end position="505"/>
    </location>
</feature>
<feature type="transmembrane region" description="Helical" evidence="5">
    <location>
        <begin position="506"/>
        <end position="526"/>
    </location>
</feature>
<feature type="topological domain" description="Extracellular" evidence="5">
    <location>
        <begin position="527"/>
        <end position="563"/>
    </location>
</feature>
<feature type="transmembrane region" description="Helical" evidence="5">
    <location>
        <begin position="564"/>
        <end position="584"/>
    </location>
</feature>
<feature type="topological domain" description="Cytoplasmic" evidence="5">
    <location>
        <begin position="585"/>
        <end position="593"/>
    </location>
</feature>
<feature type="transmembrane region" description="Helical" evidence="5">
    <location>
        <begin position="594"/>
        <end position="614"/>
    </location>
</feature>
<feature type="topological domain" description="Extracellular" evidence="5">
    <location>
        <begin position="615"/>
        <end position="685"/>
    </location>
</feature>
<feature type="transmembrane region" description="Helical" evidence="5">
    <location>
        <begin position="686"/>
        <end position="706"/>
    </location>
</feature>
<feature type="topological domain" description="Cytoplasmic" evidence="5">
    <location>
        <begin position="707"/>
        <end position="729"/>
    </location>
</feature>
<feature type="transmembrane region" description="Helical" evidence="5">
    <location>
        <begin position="730"/>
        <end position="750"/>
    </location>
</feature>
<feature type="topological domain" description="Extracellular" evidence="5">
    <location>
        <begin position="751"/>
        <end position="776"/>
    </location>
</feature>
<feature type="transmembrane region" description="Helical" evidence="5">
    <location>
        <begin position="777"/>
        <end position="797"/>
    </location>
</feature>
<feature type="topological domain" description="Cytoplasmic" evidence="5">
    <location>
        <begin position="798"/>
        <end position="812"/>
    </location>
</feature>
<feature type="transmembrane region" description="Helical" evidence="5">
    <location>
        <begin position="813"/>
        <end position="833"/>
    </location>
</feature>
<feature type="topological domain" description="Extracellular" evidence="5">
    <location>
        <begin position="834"/>
        <end position="876"/>
    </location>
</feature>
<feature type="transmembrane region" description="Helical" evidence="5">
    <location>
        <begin position="877"/>
        <end position="897"/>
    </location>
</feature>
<feature type="topological domain" description="Cytoplasmic" evidence="5">
    <location>
        <begin position="898"/>
        <end position="1034"/>
    </location>
</feature>
<feature type="region of interest" description="Disordered" evidence="6">
    <location>
        <begin position="1"/>
        <end position="31"/>
    </location>
</feature>
<feature type="region of interest" description="Disordered" evidence="6">
    <location>
        <begin position="53"/>
        <end position="99"/>
    </location>
</feature>
<feature type="region of interest" description="Disordered" evidence="6">
    <location>
        <begin position="250"/>
        <end position="276"/>
    </location>
</feature>
<feature type="region of interest" description="Essential for cell membrane localization and transport activity" evidence="3">
    <location>
        <begin position="815"/>
        <end position="915"/>
    </location>
</feature>
<feature type="region of interest" description="CA2-binding" evidence="1">
    <location>
        <begin position="918"/>
        <end position="920"/>
    </location>
</feature>
<feature type="region of interest" description="Disordered" evidence="6">
    <location>
        <begin position="926"/>
        <end position="946"/>
    </location>
</feature>
<feature type="short sequence motif" description="PDZ-binding" evidence="1">
    <location>
        <begin position="1031"/>
        <end position="1034"/>
    </location>
</feature>
<feature type="compositionally biased region" description="Basic residues" evidence="6">
    <location>
        <begin position="60"/>
        <end position="77"/>
    </location>
</feature>
<feature type="compositionally biased region" description="Basic and acidic residues" evidence="6">
    <location>
        <begin position="78"/>
        <end position="90"/>
    </location>
</feature>
<feature type="compositionally biased region" description="Polar residues" evidence="6">
    <location>
        <begin position="250"/>
        <end position="260"/>
    </location>
</feature>
<feature type="modified residue" description="Phosphoserine" evidence="20">
    <location>
        <position position="57"/>
    </location>
</feature>
<feature type="modified residue" description="Phosphoserine" evidence="3">
    <location>
        <position position="60"/>
    </location>
</feature>
<feature type="modified residue" description="Phosphoserine" evidence="2">
    <location>
        <position position="89"/>
    </location>
</feature>
<feature type="modified residue" description="Phosphoserine" evidence="2">
    <location>
        <position position="155"/>
    </location>
</feature>
<feature type="modified residue" description="Phosphoserine" evidence="20 21">
    <location>
        <position position="238"/>
    </location>
</feature>
<feature type="modified residue" description="Phosphoserine" evidence="21">
    <location>
        <position position="250"/>
    </location>
</feature>
<feature type="modified residue" description="Phosphoserine" evidence="2">
    <location>
        <position position="268"/>
    </location>
</feature>
<feature type="modified residue" description="Phosphoserine" evidence="21">
    <location>
        <position position="271"/>
    </location>
</feature>
<feature type="modified residue" description="Phosphoserine" evidence="18 21">
    <location>
        <position position="275"/>
    </location>
</feature>
<feature type="modified residue" description="Phosphoserine" evidence="3">
    <location>
        <position position="424"/>
    </location>
</feature>
<feature type="modified residue" description="Phosphothreonine" evidence="21">
    <location>
        <position position="951"/>
    </location>
</feature>
<feature type="modified residue" description="Phosphoserine" evidence="19 20 21">
    <location>
        <position position="960"/>
    </location>
</feature>
<feature type="modified residue" description="Phosphoserine" evidence="3">
    <location>
        <position position="1033"/>
    </location>
</feature>
<feature type="glycosylation site" description="N-linked (GlcNAc...) asparagine" evidence="5">
    <location>
        <position position="176"/>
    </location>
</feature>
<feature type="glycosylation site" description="N-linked (GlcNAc...) asparagine" evidence="5">
    <location>
        <position position="274"/>
    </location>
</feature>
<feature type="glycosylation site" description="N-linked (GlcNAc...) asparagine" evidence="5">
    <location>
        <position position="644"/>
    </location>
</feature>
<feature type="glycosylation site" description="N-linked (GlcNAc...) asparagine" evidence="12">
    <location>
        <position position="654"/>
    </location>
</feature>
<feature type="glycosylation site" description="N-linked (GlcNAc...) asparagine" evidence="12">
    <location>
        <position position="664"/>
    </location>
</feature>
<feature type="disulfide bond" evidence="4">
    <location>
        <begin position="634"/>
        <end position="636"/>
    </location>
</feature>
<feature type="disulfide bond" evidence="4">
    <location>
        <begin position="670"/>
        <end position="682"/>
    </location>
</feature>
<feature type="splice variant" id="VSP_017166" description="In isoform 2." evidence="16">
    <original>G</original>
    <variation>GKKHSDPHLLERNG</variation>
    <location>
        <position position="243"/>
    </location>
</feature>
<feature type="splice variant" id="VSP_017167" description="In isoform 2." evidence="16">
    <original>F</original>
    <variation>KGAGYHLDLLMVGVMLGVCSIMGLPWFVAATVLSISHVNSLKVESECSAPGEQPKFLGIREQRVTGLMIFILMGLSVFMTSVLKVKPLWQCSTILFTLTFILSCKEIKH</variation>
    <location>
        <position position="815"/>
    </location>
</feature>
<feature type="splice variant" id="VSP_017168" description="In isoform 2." evidence="16">
    <location>
        <begin position="816"/>
        <end position="1034"/>
    </location>
</feature>
<feature type="sequence conflict" description="In Ref. 1; BAC40330." evidence="17" ref="1">
    <original>G</original>
    <variation>D</variation>
    <location>
        <position position="430"/>
    </location>
</feature>
<feature type="sequence conflict" description="In Ref. 1; BAC40330." evidence="17" ref="1">
    <original>G</original>
    <variation>R</variation>
    <location>
        <position position="717"/>
    </location>
</feature>
<feature type="modified residue" description="Phosphoserine" evidence="21">
    <location sequence="Q8BTY2-2">
        <position position="260"/>
    </location>
</feature>
<feature type="modified residue" description="Phosphoserine" evidence="20 21">
    <location sequence="Q8BTY2-2">
        <position position="263"/>
    </location>
</feature>
<name>S4A7_MOUSE</name>
<protein>
    <recommendedName>
        <fullName>Sodium bicarbonate cotransporter 3</fullName>
    </recommendedName>
    <alternativeName>
        <fullName>Solute carrier family 4 member 7</fullName>
    </alternativeName>
</protein>
<sequence>MEADGAGEQMRPLLTRGPDEEAVVDLGKTSSTVNTKFEKEELESHRAVYVGVHVPFSKESRRRHKHRGHKHHHRRRKDKDSDKEDGRESPSYDTPSQRVQFILGTEDDDEEHIPHDLFTEMDELCYRDGEEYEWKETARWLKFEEDVEDGGDRWSKPYVATLSLHSLFELRSCILNGTVMLDMRASTLDEIADMVLDNMIASGQLDDSIRENVREALLKRHHHQNEKRFTSRIPLVRSFADIGILASPQSAPGNLDNSKSGEMKGNGSGGSRENSTVDFSKVDMNFMRKIPTGAEASNVLVGEVDFLERPIIAFVRLAPAVLLSGLTEVPVPTRFLFLLLGPAGKAPQYHEIGRSIATLMTDEIFHDVAYKAKDRNDLLSGIDEFLDQVTVLPPGEWDPSIRIEPPKSVPSQEKRKIPVFPNGSAAMSVGPPKEDDHHAGPELQRTGRLFGGLILDIKRKAPFFLSDFKDALSLQCLASILFLYCACMSPVITFGGLLGEATEGRISAIESLFGASLTGIAYSLFAGQPLTILGSTGPVLVFEKILFKFCRDYHLSYLSLRTSIGLWTSFLCIVLVATDASSLVCYITRFTEEAFAALICIIFIYEALEKLFHLGEIYAFNMHNNLDELTSYTCVCAEPSNPSNETLELWKRKNITAYSVSWGNLTVSECKTFHGMFVGSACGPHGPYVPDVLFWCVVLFFTTFFLSSFLKQFKTKGYFPTKVRSTISDFAVFLTIVIMVAIDYLVGIPSPKLHVPEKFEPTDPSRGWIISPLGDNPWWTLLIAAVPALLCTILIFMDQQITAVIINRKEHKLKFIPMPVLYGVFLYMGVSSLKGIQFFDRIKLFGMPAKHQPDLIYLRYVPLWKVHVFTVVQLTCLVLLWVIKASAAAVVFPMMVLALVFVRKLMDLCFTKRELSWLDDLMPESKKKKEDDKKKKEKEEAERMLQDDEDTVHLPFERGSLLQIPVKTLKYSIDPSVVNISDEMAKTAQWKALSMNTENAKVTRPNTSPEKPVSVTINFEDEPSKKYMDAETSL</sequence>
<accession>Q8BTY2</accession>
<accession>Q3U5H7</accession>